<sequence length="443" mass="50222">MESLASLYKNHIATLQERTRDALARFKLDALLIHSGELFNVFLDDHPYPFKVNPQFKAWVPVTQVPNCWLLVDGVNKPKLWFYLPVDYWHNVEPLPTSFWTEDVEVIALPKADGIGSLLPAARGNIGYIGPVPERALQLGIEASNINPKGVIDYLHYYRSFKTEYELACMREAQKMAVNGHRAAEEAFRSGMSEFDINIAYLTATGHRDTDVPYSNIVALNEHASVLHYTKLDHQAPEEMRSFLLDAGAEYNGYAADLTRTWSAKSDNDYAQLVKDVNDEQLALIATMKAGVSYVDYHLQFHQRIAKLLRKHQIITDMSEEAMVENDLTGPFMPHGIGHPLGLQVHDVAGFMQDDSGTHLAAPAKYPYLRCTRILQPGMVLTIEPGIYFIESLLAPWREGQFSKHFNWQKIEALKPFSGIRIEDNVVIHENNVENMTRDLKLA</sequence>
<comment type="function">
    <text evidence="1">Splits dipeptides with a prolyl residue in the C-terminal position.</text>
</comment>
<comment type="catalytic activity">
    <reaction evidence="1">
        <text>Xaa-L-Pro dipeptide + H2O = an L-alpha-amino acid + L-proline</text>
        <dbReference type="Rhea" id="RHEA:76407"/>
        <dbReference type="ChEBI" id="CHEBI:15377"/>
        <dbReference type="ChEBI" id="CHEBI:59869"/>
        <dbReference type="ChEBI" id="CHEBI:60039"/>
        <dbReference type="ChEBI" id="CHEBI:195196"/>
        <dbReference type="EC" id="3.4.13.9"/>
    </reaction>
</comment>
<comment type="cofactor">
    <cofactor evidence="1">
        <name>Mn(2+)</name>
        <dbReference type="ChEBI" id="CHEBI:29035"/>
    </cofactor>
    <text evidence="1">Binds 2 manganese ions per subunit.</text>
</comment>
<comment type="similarity">
    <text evidence="1">Belongs to the peptidase M24B family. Bacterial-type prolidase subfamily.</text>
</comment>
<name>PEPQ_SHIB3</name>
<dbReference type="EC" id="3.4.13.9" evidence="1"/>
<dbReference type="EMBL" id="CP001063">
    <property type="protein sequence ID" value="ACD08805.1"/>
    <property type="molecule type" value="Genomic_DNA"/>
</dbReference>
<dbReference type="RefSeq" id="WP_000444570.1">
    <property type="nucleotide sequence ID" value="NC_010658.1"/>
</dbReference>
<dbReference type="SMR" id="B2TVJ6"/>
<dbReference type="STRING" id="344609.SbBS512_E4317"/>
<dbReference type="MEROPS" id="M24.003"/>
<dbReference type="KEGG" id="sbc:SbBS512_E4317"/>
<dbReference type="HOGENOM" id="CLU_050675_0_0_6"/>
<dbReference type="Proteomes" id="UP000001030">
    <property type="component" value="Chromosome"/>
</dbReference>
<dbReference type="GO" id="GO:0005829">
    <property type="term" value="C:cytosol"/>
    <property type="evidence" value="ECO:0007669"/>
    <property type="project" value="TreeGrafter"/>
</dbReference>
<dbReference type="GO" id="GO:0004177">
    <property type="term" value="F:aminopeptidase activity"/>
    <property type="evidence" value="ECO:0007669"/>
    <property type="project" value="TreeGrafter"/>
</dbReference>
<dbReference type="GO" id="GO:0046872">
    <property type="term" value="F:metal ion binding"/>
    <property type="evidence" value="ECO:0007669"/>
    <property type="project" value="UniProtKB-KW"/>
</dbReference>
<dbReference type="GO" id="GO:0008235">
    <property type="term" value="F:metalloexopeptidase activity"/>
    <property type="evidence" value="ECO:0007669"/>
    <property type="project" value="UniProtKB-UniRule"/>
</dbReference>
<dbReference type="GO" id="GO:0016795">
    <property type="term" value="F:phosphoric triester hydrolase activity"/>
    <property type="evidence" value="ECO:0007669"/>
    <property type="project" value="InterPro"/>
</dbReference>
<dbReference type="GO" id="GO:0102009">
    <property type="term" value="F:proline dipeptidase activity"/>
    <property type="evidence" value="ECO:0007669"/>
    <property type="project" value="UniProtKB-EC"/>
</dbReference>
<dbReference type="GO" id="GO:0006508">
    <property type="term" value="P:proteolysis"/>
    <property type="evidence" value="ECO:0007669"/>
    <property type="project" value="UniProtKB-KW"/>
</dbReference>
<dbReference type="CDD" id="cd01087">
    <property type="entry name" value="Prolidase"/>
    <property type="match status" value="1"/>
</dbReference>
<dbReference type="FunFam" id="3.40.350.10:FF:000002">
    <property type="entry name" value="Xaa-Pro dipeptidase"/>
    <property type="match status" value="1"/>
</dbReference>
<dbReference type="FunFam" id="3.90.230.10:FF:000006">
    <property type="entry name" value="Xaa-Pro dipeptidase"/>
    <property type="match status" value="1"/>
</dbReference>
<dbReference type="Gene3D" id="3.90.230.10">
    <property type="entry name" value="Creatinase/methionine aminopeptidase superfamily"/>
    <property type="match status" value="1"/>
</dbReference>
<dbReference type="Gene3D" id="3.40.350.10">
    <property type="entry name" value="Creatinase/prolidase N-terminal domain"/>
    <property type="match status" value="1"/>
</dbReference>
<dbReference type="HAMAP" id="MF_01279">
    <property type="entry name" value="X_Pro_dipeptid"/>
    <property type="match status" value="1"/>
</dbReference>
<dbReference type="InterPro" id="IPR029149">
    <property type="entry name" value="Creatin/AminoP/Spt16_N"/>
</dbReference>
<dbReference type="InterPro" id="IPR036005">
    <property type="entry name" value="Creatinase/aminopeptidase-like"/>
</dbReference>
<dbReference type="InterPro" id="IPR048819">
    <property type="entry name" value="PepQ_N"/>
</dbReference>
<dbReference type="InterPro" id="IPR000994">
    <property type="entry name" value="Pept_M24"/>
</dbReference>
<dbReference type="InterPro" id="IPR001131">
    <property type="entry name" value="Peptidase_M24B_aminopep-P_CS"/>
</dbReference>
<dbReference type="InterPro" id="IPR052433">
    <property type="entry name" value="X-Pro_dipept-like"/>
</dbReference>
<dbReference type="InterPro" id="IPR022846">
    <property type="entry name" value="X_Pro_dipept"/>
</dbReference>
<dbReference type="NCBIfam" id="NF010133">
    <property type="entry name" value="PRK13607.1"/>
    <property type="match status" value="1"/>
</dbReference>
<dbReference type="PANTHER" id="PTHR43226">
    <property type="entry name" value="XAA-PRO AMINOPEPTIDASE 3"/>
    <property type="match status" value="1"/>
</dbReference>
<dbReference type="PANTHER" id="PTHR43226:SF8">
    <property type="entry name" value="XAA-PRO DIPEPTIDASE"/>
    <property type="match status" value="1"/>
</dbReference>
<dbReference type="Pfam" id="PF21216">
    <property type="entry name" value="PepQ_N"/>
    <property type="match status" value="1"/>
</dbReference>
<dbReference type="Pfam" id="PF00557">
    <property type="entry name" value="Peptidase_M24"/>
    <property type="match status" value="1"/>
</dbReference>
<dbReference type="SUPFAM" id="SSF55920">
    <property type="entry name" value="Creatinase/aminopeptidase"/>
    <property type="match status" value="1"/>
</dbReference>
<dbReference type="PROSITE" id="PS00491">
    <property type="entry name" value="PROLINE_PEPTIDASE"/>
    <property type="match status" value="1"/>
</dbReference>
<feature type="chain" id="PRO_1000140333" description="Xaa-Pro dipeptidase">
    <location>
        <begin position="1"/>
        <end position="443"/>
    </location>
</feature>
<feature type="binding site" evidence="1">
    <location>
        <position position="246"/>
    </location>
    <ligand>
        <name>Mn(2+)</name>
        <dbReference type="ChEBI" id="CHEBI:29035"/>
        <label>2</label>
    </ligand>
</feature>
<feature type="binding site" evidence="1">
    <location>
        <position position="257"/>
    </location>
    <ligand>
        <name>Mn(2+)</name>
        <dbReference type="ChEBI" id="CHEBI:29035"/>
        <label>1</label>
    </ligand>
</feature>
<feature type="binding site" evidence="1">
    <location>
        <position position="257"/>
    </location>
    <ligand>
        <name>Mn(2+)</name>
        <dbReference type="ChEBI" id="CHEBI:29035"/>
        <label>2</label>
    </ligand>
</feature>
<feature type="binding site" evidence="1">
    <location>
        <position position="339"/>
    </location>
    <ligand>
        <name>Mn(2+)</name>
        <dbReference type="ChEBI" id="CHEBI:29035"/>
        <label>1</label>
    </ligand>
</feature>
<feature type="binding site" evidence="1">
    <location>
        <position position="384"/>
    </location>
    <ligand>
        <name>Mn(2+)</name>
        <dbReference type="ChEBI" id="CHEBI:29035"/>
        <label>1</label>
    </ligand>
</feature>
<feature type="binding site" evidence="1">
    <location>
        <position position="423"/>
    </location>
    <ligand>
        <name>Mn(2+)</name>
        <dbReference type="ChEBI" id="CHEBI:29035"/>
        <label>1</label>
    </ligand>
</feature>
<feature type="binding site" evidence="1">
    <location>
        <position position="423"/>
    </location>
    <ligand>
        <name>Mn(2+)</name>
        <dbReference type="ChEBI" id="CHEBI:29035"/>
        <label>2</label>
    </ligand>
</feature>
<evidence type="ECO:0000255" key="1">
    <source>
        <dbReference type="HAMAP-Rule" id="MF_01279"/>
    </source>
</evidence>
<keyword id="KW-0224">Dipeptidase</keyword>
<keyword id="KW-0378">Hydrolase</keyword>
<keyword id="KW-0464">Manganese</keyword>
<keyword id="KW-0479">Metal-binding</keyword>
<keyword id="KW-0482">Metalloprotease</keyword>
<keyword id="KW-0645">Protease</keyword>
<keyword id="KW-1185">Reference proteome</keyword>
<accession>B2TVJ6</accession>
<protein>
    <recommendedName>
        <fullName evidence="1">Xaa-Pro dipeptidase</fullName>
        <shortName evidence="1">X-Pro dipeptidase</shortName>
        <ecNumber evidence="1">3.4.13.9</ecNumber>
    </recommendedName>
    <alternativeName>
        <fullName evidence="1">Imidodipeptidase</fullName>
    </alternativeName>
    <alternativeName>
        <fullName evidence="1">Proline dipeptidase</fullName>
        <shortName evidence="1">Prolidase</shortName>
    </alternativeName>
</protein>
<organism>
    <name type="scientific">Shigella boydii serotype 18 (strain CDC 3083-94 / BS512)</name>
    <dbReference type="NCBI Taxonomy" id="344609"/>
    <lineage>
        <taxon>Bacteria</taxon>
        <taxon>Pseudomonadati</taxon>
        <taxon>Pseudomonadota</taxon>
        <taxon>Gammaproteobacteria</taxon>
        <taxon>Enterobacterales</taxon>
        <taxon>Enterobacteriaceae</taxon>
        <taxon>Shigella</taxon>
    </lineage>
</organism>
<gene>
    <name evidence="1" type="primary">pepQ</name>
    <name type="ordered locus">SbBS512_E4317</name>
</gene>
<proteinExistence type="inferred from homology"/>
<reference key="1">
    <citation type="submission" date="2008-05" db="EMBL/GenBank/DDBJ databases">
        <title>Complete sequence of Shigella boydii serotype 18 strain BS512.</title>
        <authorList>
            <person name="Rasko D.A."/>
            <person name="Rosovitz M."/>
            <person name="Maurelli A.T."/>
            <person name="Myers G."/>
            <person name="Seshadri R."/>
            <person name="Cer R."/>
            <person name="Jiang L."/>
            <person name="Ravel J."/>
            <person name="Sebastian Y."/>
        </authorList>
    </citation>
    <scope>NUCLEOTIDE SEQUENCE [LARGE SCALE GENOMIC DNA]</scope>
    <source>
        <strain>CDC 3083-94 / BS512</strain>
    </source>
</reference>